<reference key="1">
    <citation type="journal article" date="1989" name="J. Bacteriol.">
        <title>Nucleotide sequence and mutational analysis of the structural genes (anfHDGK) for the second alternative nitrogenase from Azotobacter vinelandii.</title>
        <authorList>
            <person name="Joerger R.D."/>
            <person name="Jacobson M.R."/>
            <person name="Premakumar R."/>
            <person name="Wolfinger E.D."/>
            <person name="Bishop P.E."/>
        </authorList>
    </citation>
    <scope>NUCLEOTIDE SEQUENCE [GENOMIC DNA]</scope>
</reference>
<gene>
    <name type="primary">anfH</name>
</gene>
<comment type="function">
    <text>The key enzymatic reactions in nitrogen fixation are catalyzed by the nitrogenase complex, which has 2 components: the iron protein (component 2) and a component 1 which is either a molybdenum-iron protein, a vanadium-iron, or an iron-iron protein.</text>
</comment>
<comment type="catalytic activity">
    <reaction>
        <text>N2 + 8 reduced [2Fe-2S]-[ferredoxin] + 16 ATP + 16 H2O = H2 + 8 oxidized [2Fe-2S]-[ferredoxin] + 2 NH4(+) + 16 ADP + 16 phosphate + 6 H(+)</text>
        <dbReference type="Rhea" id="RHEA:21448"/>
        <dbReference type="Rhea" id="RHEA-COMP:10000"/>
        <dbReference type="Rhea" id="RHEA-COMP:10001"/>
        <dbReference type="ChEBI" id="CHEBI:15377"/>
        <dbReference type="ChEBI" id="CHEBI:15378"/>
        <dbReference type="ChEBI" id="CHEBI:17997"/>
        <dbReference type="ChEBI" id="CHEBI:18276"/>
        <dbReference type="ChEBI" id="CHEBI:28938"/>
        <dbReference type="ChEBI" id="CHEBI:30616"/>
        <dbReference type="ChEBI" id="CHEBI:33737"/>
        <dbReference type="ChEBI" id="CHEBI:33738"/>
        <dbReference type="ChEBI" id="CHEBI:43474"/>
        <dbReference type="ChEBI" id="CHEBI:456216"/>
        <dbReference type="EC" id="1.18.6.1"/>
    </reaction>
</comment>
<comment type="cofactor">
    <cofactor>
        <name>[4Fe-4S] cluster</name>
        <dbReference type="ChEBI" id="CHEBI:49883"/>
    </cofactor>
    <text>Binds 1 [4Fe-4S] cluster per dimer.</text>
</comment>
<comment type="subunit">
    <text>Homodimer.</text>
</comment>
<comment type="PTM">
    <text evidence="1">The reversible ADP-ribosylation of Arg-100 inactivates the nitrogenase reductase and regulates nitrogenase activity.</text>
</comment>
<comment type="miscellaneous">
    <text>This subunit is associated with the iron-iron nitrogenase component 2 (the third type of nitrogenase).</text>
</comment>
<comment type="similarity">
    <text evidence="3">Belongs to the NifH/BchL/ChlL family.</text>
</comment>
<keyword id="KW-0004">4Fe-4S</keyword>
<keyword id="KW-0013">ADP-ribosylation</keyword>
<keyword id="KW-0067">ATP-binding</keyword>
<keyword id="KW-0408">Iron</keyword>
<keyword id="KW-0411">Iron-sulfur</keyword>
<keyword id="KW-0479">Metal-binding</keyword>
<keyword id="KW-0535">Nitrogen fixation</keyword>
<keyword id="KW-0547">Nucleotide-binding</keyword>
<keyword id="KW-0560">Oxidoreductase</keyword>
<evidence type="ECO:0000250" key="1"/>
<evidence type="ECO:0000255" key="2"/>
<evidence type="ECO:0000305" key="3"/>
<name>NIFH3_AZOVI</name>
<proteinExistence type="inferred from homology"/>
<dbReference type="EC" id="1.18.6.1"/>
<dbReference type="EMBL" id="M23528">
    <property type="protein sequence ID" value="AAA82508.1"/>
    <property type="molecule type" value="Genomic_DNA"/>
</dbReference>
<dbReference type="PIR" id="A32057">
    <property type="entry name" value="A32057"/>
</dbReference>
<dbReference type="SMR" id="P16269"/>
<dbReference type="BioCyc" id="MetaCyc:MONOMER-16519"/>
<dbReference type="GO" id="GO:0051539">
    <property type="term" value="F:4 iron, 4 sulfur cluster binding"/>
    <property type="evidence" value="ECO:0007669"/>
    <property type="project" value="UniProtKB-KW"/>
</dbReference>
<dbReference type="GO" id="GO:0005524">
    <property type="term" value="F:ATP binding"/>
    <property type="evidence" value="ECO:0007669"/>
    <property type="project" value="UniProtKB-UniRule"/>
</dbReference>
<dbReference type="GO" id="GO:0046872">
    <property type="term" value="F:metal ion binding"/>
    <property type="evidence" value="ECO:0007669"/>
    <property type="project" value="UniProtKB-KW"/>
</dbReference>
<dbReference type="GO" id="GO:0016163">
    <property type="term" value="F:nitrogenase activity"/>
    <property type="evidence" value="ECO:0007669"/>
    <property type="project" value="UniProtKB-UniRule"/>
</dbReference>
<dbReference type="GO" id="GO:0009399">
    <property type="term" value="P:nitrogen fixation"/>
    <property type="evidence" value="ECO:0007669"/>
    <property type="project" value="UniProtKB-UniRule"/>
</dbReference>
<dbReference type="CDD" id="cd02040">
    <property type="entry name" value="NifH"/>
    <property type="match status" value="1"/>
</dbReference>
<dbReference type="Gene3D" id="3.40.50.300">
    <property type="entry name" value="P-loop containing nucleotide triphosphate hydrolases"/>
    <property type="match status" value="1"/>
</dbReference>
<dbReference type="HAMAP" id="MF_00533">
    <property type="entry name" value="NifH"/>
    <property type="match status" value="1"/>
</dbReference>
<dbReference type="InterPro" id="IPR030655">
    <property type="entry name" value="NifH/chlL_CS"/>
</dbReference>
<dbReference type="InterPro" id="IPR000392">
    <property type="entry name" value="NifH/frxC"/>
</dbReference>
<dbReference type="InterPro" id="IPR005977">
    <property type="entry name" value="Nitrogenase_Fe_NifH"/>
</dbReference>
<dbReference type="InterPro" id="IPR027417">
    <property type="entry name" value="P-loop_NTPase"/>
</dbReference>
<dbReference type="NCBIfam" id="TIGR01287">
    <property type="entry name" value="nifH"/>
    <property type="match status" value="1"/>
</dbReference>
<dbReference type="PANTHER" id="PTHR42864">
    <property type="entry name" value="LIGHT-INDEPENDENT PROTOCHLOROPHYLLIDE REDUCTASE IRON-SULFUR ATP-BINDING PROTEIN"/>
    <property type="match status" value="1"/>
</dbReference>
<dbReference type="PANTHER" id="PTHR42864:SF2">
    <property type="entry name" value="LIGHT-INDEPENDENT PROTOCHLOROPHYLLIDE REDUCTASE IRON-SULFUR ATP-BINDING PROTEIN"/>
    <property type="match status" value="1"/>
</dbReference>
<dbReference type="Pfam" id="PF00142">
    <property type="entry name" value="Fer4_NifH"/>
    <property type="match status" value="1"/>
</dbReference>
<dbReference type="PIRSF" id="PIRSF000363">
    <property type="entry name" value="Nitrogenase_iron"/>
    <property type="match status" value="1"/>
</dbReference>
<dbReference type="PRINTS" id="PR00091">
    <property type="entry name" value="NITROGNASEII"/>
</dbReference>
<dbReference type="SUPFAM" id="SSF52540">
    <property type="entry name" value="P-loop containing nucleoside triphosphate hydrolases"/>
    <property type="match status" value="1"/>
</dbReference>
<dbReference type="PROSITE" id="PS00746">
    <property type="entry name" value="NIFH_FRXC_1"/>
    <property type="match status" value="1"/>
</dbReference>
<dbReference type="PROSITE" id="PS00692">
    <property type="entry name" value="NIFH_FRXC_2"/>
    <property type="match status" value="1"/>
</dbReference>
<dbReference type="PROSITE" id="PS51026">
    <property type="entry name" value="NIFH_FRXC_3"/>
    <property type="match status" value="1"/>
</dbReference>
<protein>
    <recommendedName>
        <fullName>Nitrogenase iron protein 3</fullName>
        <ecNumber>1.18.6.1</ecNumber>
    </recommendedName>
    <alternativeName>
        <fullName>Nitrogenase Fe protein 3</fullName>
    </alternativeName>
    <alternativeName>
        <fullName>Nitrogenase component II</fullName>
    </alternativeName>
    <alternativeName>
        <fullName>Nitrogenase reductase</fullName>
    </alternativeName>
</protein>
<accession>P16269</accession>
<feature type="chain" id="PRO_0000139492" description="Nitrogenase iron protein 3">
    <location>
        <begin position="1"/>
        <end position="275"/>
    </location>
</feature>
<feature type="binding site" evidence="2">
    <location>
        <begin position="9"/>
        <end position="16"/>
    </location>
    <ligand>
        <name>ATP</name>
        <dbReference type="ChEBI" id="CHEBI:30616"/>
    </ligand>
</feature>
<feature type="binding site" evidence="1">
    <location>
        <position position="97"/>
    </location>
    <ligand>
        <name>[4Fe-4S] cluster</name>
        <dbReference type="ChEBI" id="CHEBI:49883"/>
        <note>ligand shared between dimeric partners</note>
    </ligand>
</feature>
<feature type="binding site" evidence="1">
    <location>
        <position position="132"/>
    </location>
    <ligand>
        <name>[4Fe-4S] cluster</name>
        <dbReference type="ChEBI" id="CHEBI:49883"/>
        <note>ligand shared between dimeric partners</note>
    </ligand>
</feature>
<feature type="modified residue" description="ADP-ribosylarginine; by dinitrogenase reductase ADP-ribosyltransferase" evidence="1">
    <location>
        <position position="100"/>
    </location>
</feature>
<organism>
    <name type="scientific">Azotobacter vinelandii</name>
    <dbReference type="NCBI Taxonomy" id="354"/>
    <lineage>
        <taxon>Bacteria</taxon>
        <taxon>Pseudomonadati</taxon>
        <taxon>Pseudomonadota</taxon>
        <taxon>Gammaproteobacteria</taxon>
        <taxon>Pseudomonadales</taxon>
        <taxon>Pseudomonadaceae</taxon>
        <taxon>Azotobacter</taxon>
    </lineage>
</organism>
<sequence>MTRKVAIYGKGGIGKSTTTQNTAAALAYFHDKKVFTHGCDPKADSTRLILGGKPEETLMDMVRDKGAEKITNDDVIKKGFLDIQCVESGGPEPGVGCAGRGVITAIDLMEENGAYTDDLDFVFFDDLGDVVCGGFAMPIRDGKAQEVYIVASGEMMAIYAANNICKGLVKYAKQSAVGLGGIICNSRKVDGERESVEEFTAAIGTKMIHFVPRDNIVQKAEFNKKTVTEFAPEENQAKEYGELARKIIENDEFVIPKPLTMDQLEDMVVKYGIAD</sequence>